<organism>
    <name type="scientific">Pectobacterium atrosepticum (strain SCRI 1043 / ATCC BAA-672)</name>
    <name type="common">Erwinia carotovora subsp. atroseptica</name>
    <dbReference type="NCBI Taxonomy" id="218491"/>
    <lineage>
        <taxon>Bacteria</taxon>
        <taxon>Pseudomonadati</taxon>
        <taxon>Pseudomonadota</taxon>
        <taxon>Gammaproteobacteria</taxon>
        <taxon>Enterobacterales</taxon>
        <taxon>Pectobacteriaceae</taxon>
        <taxon>Pectobacterium</taxon>
    </lineage>
</organism>
<feature type="chain" id="PRO_1000047830" description="Probable septum site-determining protein MinC">
    <location>
        <begin position="1"/>
        <end position="228"/>
    </location>
</feature>
<protein>
    <recommendedName>
        <fullName evidence="1">Probable septum site-determining protein MinC</fullName>
    </recommendedName>
</protein>
<sequence length="228" mass="24420">MSQMPIELKGSSFTLSVVHLHDSQPEVIYQALQEKIEQAPAFLKNAPVVINVAALTAETDWIKLQQAISSTGLHVVGVSGCTDDALKKIIAQAGLPLLSEGKAQRRVVEPVAAVPAAVKTQIIDTPVRSGQQIYARNCDLIVTSNVSAGAEVIADGNIHIYGMMRGRALAGVSGDVQSQIFCTHLAAELVSIAGRYWLSDQVPEAYFGQPARINLNQLDNVLTIKPLD</sequence>
<dbReference type="EMBL" id="BX950851">
    <property type="protein sequence ID" value="CAG75271.1"/>
    <property type="molecule type" value="Genomic_DNA"/>
</dbReference>
<dbReference type="RefSeq" id="WP_011093924.1">
    <property type="nucleotide sequence ID" value="NC_004547.2"/>
</dbReference>
<dbReference type="SMR" id="Q6D4M2"/>
<dbReference type="STRING" id="218491.ECA2368"/>
<dbReference type="GeneID" id="57208915"/>
<dbReference type="KEGG" id="eca:ECA2368"/>
<dbReference type="PATRIC" id="fig|218491.5.peg.2394"/>
<dbReference type="eggNOG" id="COG0850">
    <property type="taxonomic scope" value="Bacteria"/>
</dbReference>
<dbReference type="HOGENOM" id="CLU_067812_0_1_6"/>
<dbReference type="OrthoDB" id="9794530at2"/>
<dbReference type="Proteomes" id="UP000007966">
    <property type="component" value="Chromosome"/>
</dbReference>
<dbReference type="GO" id="GO:0000902">
    <property type="term" value="P:cell morphogenesis"/>
    <property type="evidence" value="ECO:0007669"/>
    <property type="project" value="InterPro"/>
</dbReference>
<dbReference type="GO" id="GO:0000917">
    <property type="term" value="P:division septum assembly"/>
    <property type="evidence" value="ECO:0007669"/>
    <property type="project" value="UniProtKB-KW"/>
</dbReference>
<dbReference type="GO" id="GO:0051302">
    <property type="term" value="P:regulation of cell division"/>
    <property type="evidence" value="ECO:0007669"/>
    <property type="project" value="InterPro"/>
</dbReference>
<dbReference type="GO" id="GO:1901891">
    <property type="term" value="P:regulation of cell septum assembly"/>
    <property type="evidence" value="ECO:0007669"/>
    <property type="project" value="InterPro"/>
</dbReference>
<dbReference type="Gene3D" id="2.160.20.70">
    <property type="match status" value="1"/>
</dbReference>
<dbReference type="Gene3D" id="3.30.70.260">
    <property type="match status" value="1"/>
</dbReference>
<dbReference type="HAMAP" id="MF_00267">
    <property type="entry name" value="MinC"/>
    <property type="match status" value="1"/>
</dbReference>
<dbReference type="InterPro" id="IPR016098">
    <property type="entry name" value="CAP/MinC_C"/>
</dbReference>
<dbReference type="InterPro" id="IPR013033">
    <property type="entry name" value="MinC"/>
</dbReference>
<dbReference type="InterPro" id="IPR036145">
    <property type="entry name" value="MinC_C_sf"/>
</dbReference>
<dbReference type="InterPro" id="IPR007874">
    <property type="entry name" value="MinC_N"/>
</dbReference>
<dbReference type="InterPro" id="IPR005526">
    <property type="entry name" value="Septum_form_inhib_MinC_C"/>
</dbReference>
<dbReference type="NCBIfam" id="TIGR01222">
    <property type="entry name" value="minC"/>
    <property type="match status" value="1"/>
</dbReference>
<dbReference type="PANTHER" id="PTHR34108">
    <property type="entry name" value="SEPTUM SITE-DETERMINING PROTEIN MINC"/>
    <property type="match status" value="1"/>
</dbReference>
<dbReference type="PANTHER" id="PTHR34108:SF1">
    <property type="entry name" value="SEPTUM SITE-DETERMINING PROTEIN MINC"/>
    <property type="match status" value="1"/>
</dbReference>
<dbReference type="Pfam" id="PF03775">
    <property type="entry name" value="MinC_C"/>
    <property type="match status" value="1"/>
</dbReference>
<dbReference type="Pfam" id="PF05209">
    <property type="entry name" value="MinC_N"/>
    <property type="match status" value="1"/>
</dbReference>
<dbReference type="SUPFAM" id="SSF63848">
    <property type="entry name" value="Cell-division inhibitor MinC, C-terminal domain"/>
    <property type="match status" value="1"/>
</dbReference>
<evidence type="ECO:0000255" key="1">
    <source>
        <dbReference type="HAMAP-Rule" id="MF_00267"/>
    </source>
</evidence>
<proteinExistence type="inferred from homology"/>
<comment type="function">
    <text evidence="1">Cell division inhibitor that blocks the formation of polar Z ring septums. Rapidly oscillates between the poles of the cell to destabilize FtsZ filaments that have formed before they mature into polar Z rings. Prevents FtsZ polymerization.</text>
</comment>
<comment type="subunit">
    <text evidence="1">Interacts with MinD and FtsZ.</text>
</comment>
<comment type="similarity">
    <text evidence="1">Belongs to the MinC family.</text>
</comment>
<gene>
    <name evidence="1" type="primary">minC</name>
    <name type="ordered locus">ECA2368</name>
</gene>
<keyword id="KW-0131">Cell cycle</keyword>
<keyword id="KW-0132">Cell division</keyword>
<keyword id="KW-1185">Reference proteome</keyword>
<keyword id="KW-0717">Septation</keyword>
<name>MINC_PECAS</name>
<reference key="1">
    <citation type="journal article" date="2004" name="Proc. Natl. Acad. Sci. U.S.A.">
        <title>Genome sequence of the enterobacterial phytopathogen Erwinia carotovora subsp. atroseptica and characterization of virulence factors.</title>
        <authorList>
            <person name="Bell K.S."/>
            <person name="Sebaihia M."/>
            <person name="Pritchard L."/>
            <person name="Holden M.T.G."/>
            <person name="Hyman L.J."/>
            <person name="Holeva M.C."/>
            <person name="Thomson N.R."/>
            <person name="Bentley S.D."/>
            <person name="Churcher L.J.C."/>
            <person name="Mungall K."/>
            <person name="Atkin R."/>
            <person name="Bason N."/>
            <person name="Brooks K."/>
            <person name="Chillingworth T."/>
            <person name="Clark K."/>
            <person name="Doggett J."/>
            <person name="Fraser A."/>
            <person name="Hance Z."/>
            <person name="Hauser H."/>
            <person name="Jagels K."/>
            <person name="Moule S."/>
            <person name="Norbertczak H."/>
            <person name="Ormond D."/>
            <person name="Price C."/>
            <person name="Quail M.A."/>
            <person name="Sanders M."/>
            <person name="Walker D."/>
            <person name="Whitehead S."/>
            <person name="Salmond G.P.C."/>
            <person name="Birch P.R.J."/>
            <person name="Parkhill J."/>
            <person name="Toth I.K."/>
        </authorList>
    </citation>
    <scope>NUCLEOTIDE SEQUENCE [LARGE SCALE GENOMIC DNA]</scope>
    <source>
        <strain>SCRI 1043 / ATCC BAA-672</strain>
    </source>
</reference>
<accession>Q6D4M2</accession>